<organism>
    <name type="scientific">Mycobacterium bovis (strain BCG / Tokyo 172 / ATCC 35737 / TMC 1019)</name>
    <dbReference type="NCBI Taxonomy" id="561275"/>
    <lineage>
        <taxon>Bacteria</taxon>
        <taxon>Bacillati</taxon>
        <taxon>Actinomycetota</taxon>
        <taxon>Actinomycetes</taxon>
        <taxon>Mycobacteriales</taxon>
        <taxon>Mycobacteriaceae</taxon>
        <taxon>Mycobacterium</taxon>
        <taxon>Mycobacterium tuberculosis complex</taxon>
    </lineage>
</organism>
<keyword id="KW-0030">Aminoacyl-tRNA synthetase</keyword>
<keyword id="KW-0067">ATP-binding</keyword>
<keyword id="KW-0963">Cytoplasm</keyword>
<keyword id="KW-0436">Ligase</keyword>
<keyword id="KW-0547">Nucleotide-binding</keyword>
<keyword id="KW-0648">Protein biosynthesis</keyword>
<proteinExistence type="inferred from homology"/>
<accession>C1AF49</accession>
<evidence type="ECO:0000255" key="1">
    <source>
        <dbReference type="HAMAP-Rule" id="MF_00127"/>
    </source>
</evidence>
<dbReference type="EC" id="6.1.1.21" evidence="1"/>
<dbReference type="EMBL" id="AP010918">
    <property type="protein sequence ID" value="BAH26878.1"/>
    <property type="molecule type" value="Genomic_DNA"/>
</dbReference>
<dbReference type="RefSeq" id="WP_003413365.1">
    <property type="nucleotide sequence ID" value="NZ_CP014566.1"/>
</dbReference>
<dbReference type="SMR" id="C1AF49"/>
<dbReference type="GeneID" id="45426582"/>
<dbReference type="KEGG" id="mbt:JTY_2597"/>
<dbReference type="HOGENOM" id="CLU_025113_1_1_11"/>
<dbReference type="GO" id="GO:0005737">
    <property type="term" value="C:cytoplasm"/>
    <property type="evidence" value="ECO:0007669"/>
    <property type="project" value="UniProtKB-SubCell"/>
</dbReference>
<dbReference type="GO" id="GO:0005524">
    <property type="term" value="F:ATP binding"/>
    <property type="evidence" value="ECO:0007669"/>
    <property type="project" value="UniProtKB-UniRule"/>
</dbReference>
<dbReference type="GO" id="GO:0004821">
    <property type="term" value="F:histidine-tRNA ligase activity"/>
    <property type="evidence" value="ECO:0007669"/>
    <property type="project" value="UniProtKB-UniRule"/>
</dbReference>
<dbReference type="GO" id="GO:0006427">
    <property type="term" value="P:histidyl-tRNA aminoacylation"/>
    <property type="evidence" value="ECO:0007669"/>
    <property type="project" value="UniProtKB-UniRule"/>
</dbReference>
<dbReference type="CDD" id="cd00773">
    <property type="entry name" value="HisRS-like_core"/>
    <property type="match status" value="1"/>
</dbReference>
<dbReference type="CDD" id="cd00859">
    <property type="entry name" value="HisRS_anticodon"/>
    <property type="match status" value="1"/>
</dbReference>
<dbReference type="FunFam" id="3.30.930.10:FF:000005">
    <property type="entry name" value="Histidine--tRNA ligase"/>
    <property type="match status" value="1"/>
</dbReference>
<dbReference type="Gene3D" id="3.40.50.800">
    <property type="entry name" value="Anticodon-binding domain"/>
    <property type="match status" value="1"/>
</dbReference>
<dbReference type="Gene3D" id="3.30.930.10">
    <property type="entry name" value="Bira Bifunctional Protein, Domain 2"/>
    <property type="match status" value="1"/>
</dbReference>
<dbReference type="HAMAP" id="MF_00127">
    <property type="entry name" value="His_tRNA_synth"/>
    <property type="match status" value="1"/>
</dbReference>
<dbReference type="InterPro" id="IPR006195">
    <property type="entry name" value="aa-tRNA-synth_II"/>
</dbReference>
<dbReference type="InterPro" id="IPR045864">
    <property type="entry name" value="aa-tRNA-synth_II/BPL/LPL"/>
</dbReference>
<dbReference type="InterPro" id="IPR004154">
    <property type="entry name" value="Anticodon-bd"/>
</dbReference>
<dbReference type="InterPro" id="IPR036621">
    <property type="entry name" value="Anticodon-bd_dom_sf"/>
</dbReference>
<dbReference type="InterPro" id="IPR015807">
    <property type="entry name" value="His-tRNA-ligase"/>
</dbReference>
<dbReference type="InterPro" id="IPR041715">
    <property type="entry name" value="HisRS-like_core"/>
</dbReference>
<dbReference type="InterPro" id="IPR004516">
    <property type="entry name" value="HisRS/HisZ"/>
</dbReference>
<dbReference type="InterPro" id="IPR033656">
    <property type="entry name" value="HisRS_anticodon"/>
</dbReference>
<dbReference type="NCBIfam" id="TIGR00442">
    <property type="entry name" value="hisS"/>
    <property type="match status" value="1"/>
</dbReference>
<dbReference type="PANTHER" id="PTHR43707:SF1">
    <property type="entry name" value="HISTIDINE--TRNA LIGASE, MITOCHONDRIAL-RELATED"/>
    <property type="match status" value="1"/>
</dbReference>
<dbReference type="PANTHER" id="PTHR43707">
    <property type="entry name" value="HISTIDYL-TRNA SYNTHETASE"/>
    <property type="match status" value="1"/>
</dbReference>
<dbReference type="Pfam" id="PF03129">
    <property type="entry name" value="HGTP_anticodon"/>
    <property type="match status" value="1"/>
</dbReference>
<dbReference type="Pfam" id="PF13393">
    <property type="entry name" value="tRNA-synt_His"/>
    <property type="match status" value="1"/>
</dbReference>
<dbReference type="PIRSF" id="PIRSF001549">
    <property type="entry name" value="His-tRNA_synth"/>
    <property type="match status" value="1"/>
</dbReference>
<dbReference type="SUPFAM" id="SSF52954">
    <property type="entry name" value="Class II aaRS ABD-related"/>
    <property type="match status" value="1"/>
</dbReference>
<dbReference type="SUPFAM" id="SSF55681">
    <property type="entry name" value="Class II aaRS and biotin synthetases"/>
    <property type="match status" value="1"/>
</dbReference>
<dbReference type="PROSITE" id="PS50862">
    <property type="entry name" value="AA_TRNA_LIGASE_II"/>
    <property type="match status" value="1"/>
</dbReference>
<protein>
    <recommendedName>
        <fullName evidence="1">Histidine--tRNA ligase</fullName>
        <ecNumber evidence="1">6.1.1.21</ecNumber>
    </recommendedName>
    <alternativeName>
        <fullName evidence="1">Histidyl-tRNA synthetase</fullName>
        <shortName evidence="1">HisRS</shortName>
    </alternativeName>
</protein>
<name>SYH_MYCBT</name>
<sequence length="423" mass="45149">MTEFSSFSAPKGVPDYVPPDSAQFVAVRDGLLAAARQAGYSHIELPIFEDTALFARGVGESTDVVSKEMYTFADRGDRSVTLRPEGTAGVVRAVIEHGLDRGALPVKLCYAGPFFRYERPQAGRYRQLQQVGVEAIGVDDPALDAEVIAIADAGFRSLGLDGFRLEITSLGDESCRPQYRELLQEFLFGLDLDEDTRRRAGINPLRVLDDKRPELRAMTASAPVLLDHLSDVAKQHFDTVLAHLDALGVPYVINPRMVRGLDYYTKTAFEFVHDGLGAQSGIGGGGRYDGLMHQLGGQDLSGIGFGLGVDRTVLALRAEGKTAGDSARCDVFGVPLGEAAKLRLAVLAGRLRAAGVRVDLAYGDRGLKGAMRAAARSGARVALVAGDRDIEAGTVAVKDLTTGEQVSVSMDSVVAEVISRLAG</sequence>
<gene>
    <name evidence="1" type="primary">hisS</name>
    <name type="ordered locus">JTY_2597</name>
</gene>
<reference key="1">
    <citation type="journal article" date="2009" name="Vaccine">
        <title>Whole genome sequence analysis of Mycobacterium bovis bacillus Calmette-Guerin (BCG) Tokyo 172: a comparative study of BCG vaccine substrains.</title>
        <authorList>
            <person name="Seki M."/>
            <person name="Honda I."/>
            <person name="Fujita I."/>
            <person name="Yano I."/>
            <person name="Yamamoto S."/>
            <person name="Koyama A."/>
        </authorList>
    </citation>
    <scope>NUCLEOTIDE SEQUENCE [LARGE SCALE GENOMIC DNA]</scope>
    <source>
        <strain>BCG / Tokyo 172 / ATCC 35737 / TMC 1019</strain>
    </source>
</reference>
<feature type="chain" id="PRO_1000199142" description="Histidine--tRNA ligase">
    <location>
        <begin position="1"/>
        <end position="423"/>
    </location>
</feature>
<comment type="catalytic activity">
    <reaction evidence="1">
        <text>tRNA(His) + L-histidine + ATP = L-histidyl-tRNA(His) + AMP + diphosphate + H(+)</text>
        <dbReference type="Rhea" id="RHEA:17313"/>
        <dbReference type="Rhea" id="RHEA-COMP:9665"/>
        <dbReference type="Rhea" id="RHEA-COMP:9689"/>
        <dbReference type="ChEBI" id="CHEBI:15378"/>
        <dbReference type="ChEBI" id="CHEBI:30616"/>
        <dbReference type="ChEBI" id="CHEBI:33019"/>
        <dbReference type="ChEBI" id="CHEBI:57595"/>
        <dbReference type="ChEBI" id="CHEBI:78442"/>
        <dbReference type="ChEBI" id="CHEBI:78527"/>
        <dbReference type="ChEBI" id="CHEBI:456215"/>
        <dbReference type="EC" id="6.1.1.21"/>
    </reaction>
</comment>
<comment type="subunit">
    <text evidence="1">Homodimer.</text>
</comment>
<comment type="subcellular location">
    <subcellularLocation>
        <location evidence="1">Cytoplasm</location>
    </subcellularLocation>
</comment>
<comment type="similarity">
    <text evidence="1">Belongs to the class-II aminoacyl-tRNA synthetase family.</text>
</comment>